<evidence type="ECO:0000250" key="1"/>
<evidence type="ECO:0000255" key="2">
    <source>
        <dbReference type="HAMAP-Rule" id="MF_01051"/>
    </source>
</evidence>
<evidence type="ECO:0000305" key="3"/>
<keyword id="KW-0456">Lyase</keyword>
<accession>Q8Z9L5</accession>
<gene>
    <name evidence="2" type="primary">caiD</name>
    <name type="ordered locus">STY0080</name>
    <name type="ordered locus">t0071</name>
</gene>
<dbReference type="EC" id="4.2.1.149" evidence="2"/>
<dbReference type="EMBL" id="AL513382">
    <property type="protein sequence ID" value="CAD01224.1"/>
    <property type="molecule type" value="Genomic_DNA"/>
</dbReference>
<dbReference type="EMBL" id="AE014613">
    <property type="protein sequence ID" value="AAO67804.1"/>
    <property type="molecule type" value="Genomic_DNA"/>
</dbReference>
<dbReference type="RefSeq" id="NP_454680.1">
    <property type="nucleotide sequence ID" value="NC_003198.1"/>
</dbReference>
<dbReference type="RefSeq" id="WP_000004377.1">
    <property type="nucleotide sequence ID" value="NZ_WSUR01000028.1"/>
</dbReference>
<dbReference type="SMR" id="Q8Z9L5"/>
<dbReference type="STRING" id="220341.gene:17584126"/>
<dbReference type="KEGG" id="stt:t0071"/>
<dbReference type="KEGG" id="sty:STY0080"/>
<dbReference type="PATRIC" id="fig|220341.7.peg.79"/>
<dbReference type="eggNOG" id="COG1024">
    <property type="taxonomic scope" value="Bacteria"/>
</dbReference>
<dbReference type="HOGENOM" id="CLU_009834_7_6_6"/>
<dbReference type="OMA" id="QYVAHVE"/>
<dbReference type="OrthoDB" id="9777711at2"/>
<dbReference type="UniPathway" id="UPA00117"/>
<dbReference type="Proteomes" id="UP000000541">
    <property type="component" value="Chromosome"/>
</dbReference>
<dbReference type="Proteomes" id="UP000002670">
    <property type="component" value="Chromosome"/>
</dbReference>
<dbReference type="GO" id="GO:0016836">
    <property type="term" value="F:hydro-lyase activity"/>
    <property type="evidence" value="ECO:0007669"/>
    <property type="project" value="UniProtKB-UniRule"/>
</dbReference>
<dbReference type="GO" id="GO:0008735">
    <property type="term" value="F:L-carnitine CoA-transferase activity"/>
    <property type="evidence" value="ECO:0007669"/>
    <property type="project" value="RHEA"/>
</dbReference>
<dbReference type="GO" id="GO:0009437">
    <property type="term" value="P:carnitine metabolic process"/>
    <property type="evidence" value="ECO:0007669"/>
    <property type="project" value="UniProtKB-UniRule"/>
</dbReference>
<dbReference type="GO" id="GO:0006635">
    <property type="term" value="P:fatty acid beta-oxidation"/>
    <property type="evidence" value="ECO:0007669"/>
    <property type="project" value="TreeGrafter"/>
</dbReference>
<dbReference type="CDD" id="cd06558">
    <property type="entry name" value="crotonase-like"/>
    <property type="match status" value="1"/>
</dbReference>
<dbReference type="FunFam" id="1.10.12.10:FF:000005">
    <property type="entry name" value="Carnitinyl-CoA dehydratase"/>
    <property type="match status" value="1"/>
</dbReference>
<dbReference type="FunFam" id="3.90.226.10:FF:000009">
    <property type="entry name" value="Carnitinyl-CoA dehydratase"/>
    <property type="match status" value="1"/>
</dbReference>
<dbReference type="Gene3D" id="3.90.226.10">
    <property type="entry name" value="2-enoyl-CoA Hydratase, Chain A, domain 1"/>
    <property type="match status" value="1"/>
</dbReference>
<dbReference type="Gene3D" id="1.10.12.10">
    <property type="entry name" value="Lyase 2-enoyl-coa Hydratase, Chain A, domain 2"/>
    <property type="match status" value="1"/>
</dbReference>
<dbReference type="HAMAP" id="MF_01051">
    <property type="entry name" value="CaiD"/>
    <property type="match status" value="1"/>
</dbReference>
<dbReference type="InterPro" id="IPR022852">
    <property type="entry name" value="Carnitinyl_CoA_dehydratase"/>
</dbReference>
<dbReference type="InterPro" id="IPR029045">
    <property type="entry name" value="ClpP/crotonase-like_dom_sf"/>
</dbReference>
<dbReference type="InterPro" id="IPR018376">
    <property type="entry name" value="Enoyl-CoA_hyd/isom_CS"/>
</dbReference>
<dbReference type="InterPro" id="IPR001753">
    <property type="entry name" value="Enoyl-CoA_hydra/iso"/>
</dbReference>
<dbReference type="InterPro" id="IPR014748">
    <property type="entry name" value="Enoyl-CoA_hydra_C"/>
</dbReference>
<dbReference type="NCBIfam" id="NF002936">
    <property type="entry name" value="PRK03580.1"/>
    <property type="match status" value="1"/>
</dbReference>
<dbReference type="PANTHER" id="PTHR11941:SF54">
    <property type="entry name" value="ENOYL-COA HYDRATASE, MITOCHONDRIAL"/>
    <property type="match status" value="1"/>
</dbReference>
<dbReference type="PANTHER" id="PTHR11941">
    <property type="entry name" value="ENOYL-COA HYDRATASE-RELATED"/>
    <property type="match status" value="1"/>
</dbReference>
<dbReference type="Pfam" id="PF00378">
    <property type="entry name" value="ECH_1"/>
    <property type="match status" value="1"/>
</dbReference>
<dbReference type="SUPFAM" id="SSF52096">
    <property type="entry name" value="ClpP/crotonase"/>
    <property type="match status" value="1"/>
</dbReference>
<dbReference type="PROSITE" id="PS00166">
    <property type="entry name" value="ENOYL_COA_HYDRATASE"/>
    <property type="match status" value="1"/>
</dbReference>
<proteinExistence type="inferred from homology"/>
<comment type="function">
    <text evidence="2">Catalyzes the reversible dehydration of L-carnitinyl-CoA to crotonobetainyl-CoA.</text>
</comment>
<comment type="catalytic activity">
    <reaction evidence="2">
        <text>(R)-carnitinyl-CoA = crotonobetainyl-CoA + H2O</text>
        <dbReference type="Rhea" id="RHEA:28338"/>
        <dbReference type="ChEBI" id="CHEBI:15377"/>
        <dbReference type="ChEBI" id="CHEBI:60932"/>
        <dbReference type="ChEBI" id="CHEBI:60933"/>
        <dbReference type="EC" id="4.2.1.149"/>
    </reaction>
</comment>
<comment type="pathway">
    <text evidence="2">Amine and polyamine metabolism; carnitine metabolism.</text>
</comment>
<comment type="similarity">
    <text evidence="2 3">Belongs to the enoyl-CoA hydratase/isomerase family.</text>
</comment>
<reference key="1">
    <citation type="journal article" date="2001" name="Nature">
        <title>Complete genome sequence of a multiple drug resistant Salmonella enterica serovar Typhi CT18.</title>
        <authorList>
            <person name="Parkhill J."/>
            <person name="Dougan G."/>
            <person name="James K.D."/>
            <person name="Thomson N.R."/>
            <person name="Pickard D."/>
            <person name="Wain J."/>
            <person name="Churcher C.M."/>
            <person name="Mungall K.L."/>
            <person name="Bentley S.D."/>
            <person name="Holden M.T.G."/>
            <person name="Sebaihia M."/>
            <person name="Baker S."/>
            <person name="Basham D."/>
            <person name="Brooks K."/>
            <person name="Chillingworth T."/>
            <person name="Connerton P."/>
            <person name="Cronin A."/>
            <person name="Davis P."/>
            <person name="Davies R.M."/>
            <person name="Dowd L."/>
            <person name="White N."/>
            <person name="Farrar J."/>
            <person name="Feltwell T."/>
            <person name="Hamlin N."/>
            <person name="Haque A."/>
            <person name="Hien T.T."/>
            <person name="Holroyd S."/>
            <person name="Jagels K."/>
            <person name="Krogh A."/>
            <person name="Larsen T.S."/>
            <person name="Leather S."/>
            <person name="Moule S."/>
            <person name="O'Gaora P."/>
            <person name="Parry C."/>
            <person name="Quail M.A."/>
            <person name="Rutherford K.M."/>
            <person name="Simmonds M."/>
            <person name="Skelton J."/>
            <person name="Stevens K."/>
            <person name="Whitehead S."/>
            <person name="Barrell B.G."/>
        </authorList>
    </citation>
    <scope>NUCLEOTIDE SEQUENCE [LARGE SCALE GENOMIC DNA]</scope>
    <source>
        <strain>CT18</strain>
    </source>
</reference>
<reference key="2">
    <citation type="journal article" date="2003" name="J. Bacteriol.">
        <title>Comparative genomics of Salmonella enterica serovar Typhi strains Ty2 and CT18.</title>
        <authorList>
            <person name="Deng W."/>
            <person name="Liou S.-R."/>
            <person name="Plunkett G. III"/>
            <person name="Mayhew G.F."/>
            <person name="Rose D.J."/>
            <person name="Burland V."/>
            <person name="Kodoyianni V."/>
            <person name="Schwartz D.C."/>
            <person name="Blattner F.R."/>
        </authorList>
    </citation>
    <scope>NUCLEOTIDE SEQUENCE [LARGE SCALE GENOMIC DNA]</scope>
    <source>
        <strain>ATCC 700931 / Ty2</strain>
    </source>
</reference>
<sequence>MSESLHLTRNGPILEITLDRPKANAIDAKTSFAMGEAFLNFRDDPELRVAIITGGGEKFFSAGWDLKAAAEGEAPDADFGPGGFAGLTEIFDLDKPVIAAVNGYAFGGGFELALAADFIVCAENASFALPEAKLGIVPDSGGVLRLPKLLPPAIVNEMVMTGRRMSAEEALRWGIVNRVVSQSELMESARELAQQLVNSAPLAIAALKEIYRATSEMPVEEGYRYIRSGVLKHYPSVLHSEDALEGPQAFAEKRAPVWKGR</sequence>
<name>CAID_SALTI</name>
<feature type="initiator methionine" description="Removed" evidence="1">
    <location>
        <position position="1"/>
    </location>
</feature>
<feature type="chain" id="PRO_0000109352" description="Carnitinyl-CoA dehydratase">
    <location>
        <begin position="2"/>
        <end position="261"/>
    </location>
</feature>
<feature type="active site" description="Nucleophile" evidence="2">
    <location>
        <position position="111"/>
    </location>
</feature>
<feature type="active site" description="Proton acceptor" evidence="2">
    <location>
        <position position="131"/>
    </location>
</feature>
<organism>
    <name type="scientific">Salmonella typhi</name>
    <dbReference type="NCBI Taxonomy" id="90370"/>
    <lineage>
        <taxon>Bacteria</taxon>
        <taxon>Pseudomonadati</taxon>
        <taxon>Pseudomonadota</taxon>
        <taxon>Gammaproteobacteria</taxon>
        <taxon>Enterobacterales</taxon>
        <taxon>Enterobacteriaceae</taxon>
        <taxon>Salmonella</taxon>
    </lineage>
</organism>
<protein>
    <recommendedName>
        <fullName evidence="2">Carnitinyl-CoA dehydratase</fullName>
        <ecNumber evidence="2">4.2.1.149</ecNumber>
    </recommendedName>
    <alternativeName>
        <fullName evidence="2">Crotonobetainyl-CoA hydratase</fullName>
    </alternativeName>
</protein>